<comment type="function">
    <text>Involved in maceration and soft-rotting of plant tissue.</text>
</comment>
<comment type="catalytic activity">
    <reaction>
        <text>Eliminative cleavage of (1-&gt;4)-alpha-D-galacturonan to give oligosaccharides with 4-deoxy-alpha-D-galact-4-enuronosyl groups at their non-reducing ends.</text>
        <dbReference type="EC" id="4.2.2.2"/>
    </reaction>
</comment>
<comment type="cofactor">
    <cofactor evidence="1">
        <name>Ca(2+)</name>
        <dbReference type="ChEBI" id="CHEBI:29108"/>
    </cofactor>
    <text evidence="1">Binds 1 Ca(2+) ion per subunit.</text>
</comment>
<comment type="pathway">
    <text>Glycan metabolism; pectin degradation; 2-dehydro-3-deoxy-D-gluconate from pectin: step 2/5.</text>
</comment>
<comment type="subcellular location">
    <subcellularLocation>
        <location>Secreted</location>
    </subcellularLocation>
</comment>
<comment type="similarity">
    <text evidence="3">Belongs to the polysaccharide lyase 1 family. PLADES subfamily.</text>
</comment>
<organism>
    <name type="scientific">Pectobacterium atrosepticum (strain SCRI 1043 / ATCC BAA-672)</name>
    <name type="common">Erwinia carotovora subsp. atroseptica</name>
    <dbReference type="NCBI Taxonomy" id="218491"/>
    <lineage>
        <taxon>Bacteria</taxon>
        <taxon>Pseudomonadati</taxon>
        <taxon>Pseudomonadota</taxon>
        <taxon>Gammaproteobacteria</taxon>
        <taxon>Enterobacterales</taxon>
        <taxon>Pectobacteriaceae</taxon>
        <taxon>Pectobacterium</taxon>
    </lineage>
</organism>
<name>PLY2_PECAS</name>
<accession>Q6CZT3</accession>
<accession>P11431</accession>
<accession>Q06112</accession>
<accession>Q47469</accession>
<reference key="1">
    <citation type="journal article" date="1987" name="J. Bacteriol.">
        <title>Characterization of the Erwinia carotovora pelB gene and its product pectate lyase.</title>
        <authorList>
            <person name="Lei S.-P."/>
            <person name="Lin H.-C."/>
            <person name="Wang S.-S."/>
            <person name="Callaway J."/>
            <person name="Wilcox G."/>
        </authorList>
    </citation>
    <scope>NUCLEOTIDE SEQUENCE [GENOMIC DNA]</scope>
    <scope>PARTIAL PROTEIN SEQUENCE</scope>
    <source>
        <strain>EC</strain>
    </source>
</reference>
<reference key="2">
    <citation type="journal article" date="1995" name="Microbiology">
        <title>Synergism between Erwinia pectate lyase isoenzymes that depolymerize both pectate and pectin.</title>
        <authorList>
            <person name="Bartling S."/>
            <person name="Wegener C."/>
            <person name="Olsen O."/>
        </authorList>
    </citation>
    <scope>NUCLEOTIDE SEQUENCE [GENOMIC DNA]</scope>
    <source>
        <strain>C18</strain>
    </source>
</reference>
<reference key="3">
    <citation type="journal article" date="2004" name="Proc. Natl. Acad. Sci. U.S.A.">
        <title>Genome sequence of the enterobacterial phytopathogen Erwinia carotovora subsp. atroseptica and characterization of virulence factors.</title>
        <authorList>
            <person name="Bell K.S."/>
            <person name="Sebaihia M."/>
            <person name="Pritchard L."/>
            <person name="Holden M.T.G."/>
            <person name="Hyman L.J."/>
            <person name="Holeva M.C."/>
            <person name="Thomson N.R."/>
            <person name="Bentley S.D."/>
            <person name="Churcher L.J.C."/>
            <person name="Mungall K."/>
            <person name="Atkin R."/>
            <person name="Bason N."/>
            <person name="Brooks K."/>
            <person name="Chillingworth T."/>
            <person name="Clark K."/>
            <person name="Doggett J."/>
            <person name="Fraser A."/>
            <person name="Hance Z."/>
            <person name="Hauser H."/>
            <person name="Jagels K."/>
            <person name="Moule S."/>
            <person name="Norbertczak H."/>
            <person name="Ormond D."/>
            <person name="Price C."/>
            <person name="Quail M.A."/>
            <person name="Sanders M."/>
            <person name="Walker D."/>
            <person name="Whitehead S."/>
            <person name="Salmond G.P.C."/>
            <person name="Birch P.R.J."/>
            <person name="Parkhill J."/>
            <person name="Toth I.K."/>
        </authorList>
    </citation>
    <scope>NUCLEOTIDE SEQUENCE [LARGE SCALE GENOMIC DNA]</scope>
    <source>
        <strain>SCRI 1043 / ATCC BAA-672</strain>
    </source>
</reference>
<protein>
    <recommendedName>
        <fullName>Pectate lyase 2</fullName>
        <ecNumber>4.2.2.2</ecNumber>
    </recommendedName>
    <alternativeName>
        <fullName>Pectate lyase B</fullName>
        <shortName>PLB</shortName>
    </alternativeName>
    <alternativeName>
        <fullName>Pectate lyase II</fullName>
        <shortName>PEL II</shortName>
    </alternativeName>
</protein>
<gene>
    <name type="primary">pel2</name>
    <name type="synonym">pelB</name>
    <name type="ordered locus">ECA4068</name>
</gene>
<proteinExistence type="evidence at protein level"/>
<evidence type="ECO:0000250" key="1"/>
<evidence type="ECO:0000255" key="2"/>
<evidence type="ECO:0000305" key="3"/>
<dbReference type="EC" id="4.2.2.2"/>
<dbReference type="EMBL" id="M17364">
    <property type="protein sequence ID" value="AAA24848.1"/>
    <property type="molecule type" value="Genomic_DNA"/>
</dbReference>
<dbReference type="EMBL" id="X81847">
    <property type="protein sequence ID" value="CAA57440.1"/>
    <property type="molecule type" value="Genomic_DNA"/>
</dbReference>
<dbReference type="EMBL" id="BX950851">
    <property type="protein sequence ID" value="CAG76965.1"/>
    <property type="molecule type" value="Genomic_DNA"/>
</dbReference>
<dbReference type="RefSeq" id="WP_011095542.1">
    <property type="nucleotide sequence ID" value="NC_004547.2"/>
</dbReference>
<dbReference type="SMR" id="Q6CZT3"/>
<dbReference type="STRING" id="218491.ECA4068"/>
<dbReference type="CAZy" id="PL1">
    <property type="family name" value="Polysaccharide Lyase Family 1"/>
</dbReference>
<dbReference type="GeneID" id="57210732"/>
<dbReference type="KEGG" id="eca:ECA4068"/>
<dbReference type="PATRIC" id="fig|218491.5.peg.4137"/>
<dbReference type="eggNOG" id="COG3866">
    <property type="taxonomic scope" value="Bacteria"/>
</dbReference>
<dbReference type="HOGENOM" id="CLU_021894_2_1_6"/>
<dbReference type="OrthoDB" id="5592990at2"/>
<dbReference type="UniPathway" id="UPA00545">
    <property type="reaction ID" value="UER00824"/>
</dbReference>
<dbReference type="Proteomes" id="UP000007966">
    <property type="component" value="Chromosome"/>
</dbReference>
<dbReference type="GO" id="GO:0005576">
    <property type="term" value="C:extracellular region"/>
    <property type="evidence" value="ECO:0007669"/>
    <property type="project" value="UniProtKB-SubCell"/>
</dbReference>
<dbReference type="GO" id="GO:0046872">
    <property type="term" value="F:metal ion binding"/>
    <property type="evidence" value="ECO:0007669"/>
    <property type="project" value="UniProtKB-KW"/>
</dbReference>
<dbReference type="GO" id="GO:0030570">
    <property type="term" value="F:pectate lyase activity"/>
    <property type="evidence" value="ECO:0007669"/>
    <property type="project" value="UniProtKB-EC"/>
</dbReference>
<dbReference type="GO" id="GO:0045490">
    <property type="term" value="P:pectin catabolic process"/>
    <property type="evidence" value="ECO:0007669"/>
    <property type="project" value="UniProtKB-UniPathway"/>
</dbReference>
<dbReference type="Gene3D" id="2.160.20.10">
    <property type="entry name" value="Single-stranded right-handed beta-helix, Pectin lyase-like"/>
    <property type="match status" value="1"/>
</dbReference>
<dbReference type="InterPro" id="IPR002022">
    <property type="entry name" value="Pec_lyase"/>
</dbReference>
<dbReference type="InterPro" id="IPR012334">
    <property type="entry name" value="Pectin_lyas_fold"/>
</dbReference>
<dbReference type="InterPro" id="IPR011050">
    <property type="entry name" value="Pectin_lyase_fold/virulence"/>
</dbReference>
<dbReference type="InterPro" id="IPR045032">
    <property type="entry name" value="PEL"/>
</dbReference>
<dbReference type="PANTHER" id="PTHR31683">
    <property type="entry name" value="PECTATE LYASE 18-RELATED"/>
    <property type="match status" value="1"/>
</dbReference>
<dbReference type="PANTHER" id="PTHR31683:SF18">
    <property type="entry name" value="PECTATE LYASE 21-RELATED"/>
    <property type="match status" value="1"/>
</dbReference>
<dbReference type="Pfam" id="PF00544">
    <property type="entry name" value="Pectate_lyase_4"/>
    <property type="match status" value="1"/>
</dbReference>
<dbReference type="SMART" id="SM00656">
    <property type="entry name" value="Amb_all"/>
    <property type="match status" value="1"/>
</dbReference>
<dbReference type="SUPFAM" id="SSF51126">
    <property type="entry name" value="Pectin lyase-like"/>
    <property type="match status" value="1"/>
</dbReference>
<feature type="signal peptide">
    <location>
        <begin position="1"/>
        <end position="22"/>
    </location>
</feature>
<feature type="chain" id="PRO_0000234449" description="Pectate lyase 2">
    <location>
        <begin position="23"/>
        <end position="374"/>
    </location>
</feature>
<feature type="active site" evidence="2">
    <location>
        <position position="239"/>
    </location>
</feature>
<feature type="binding site" evidence="1">
    <location>
        <position position="150"/>
    </location>
    <ligand>
        <name>Ca(2+)</name>
        <dbReference type="ChEBI" id="CHEBI:29108"/>
    </ligand>
</feature>
<feature type="binding site" evidence="1">
    <location>
        <position position="152"/>
    </location>
    <ligand>
        <name>Ca(2+)</name>
        <dbReference type="ChEBI" id="CHEBI:29108"/>
    </ligand>
</feature>
<feature type="binding site" evidence="1">
    <location>
        <position position="187"/>
    </location>
    <ligand>
        <name>Ca(2+)</name>
        <dbReference type="ChEBI" id="CHEBI:29108"/>
    </ligand>
</feature>
<feature type="binding site" evidence="1">
    <location>
        <position position="191"/>
    </location>
    <ligand>
        <name>Ca(2+)</name>
        <dbReference type="ChEBI" id="CHEBI:29108"/>
    </ligand>
</feature>
<feature type="disulfide bond" evidence="1">
    <location>
        <begin position="93"/>
        <end position="176"/>
    </location>
</feature>
<feature type="disulfide bond" evidence="1">
    <location>
        <begin position="350"/>
        <end position="373"/>
    </location>
</feature>
<feature type="sequence conflict" description="In Ref. 1; AAA24848 and 2; CAA57440." evidence="3" ref="1 2">
    <original>T</original>
    <variation>A</variation>
    <location>
        <position position="10"/>
    </location>
</feature>
<feature type="sequence conflict" description="In Ref. 1; AAA24848 and 2; CAA57440." evidence="3" ref="1 2">
    <original>V</original>
    <variation>M</variation>
    <location>
        <position position="21"/>
    </location>
</feature>
<feature type="sequence conflict" description="In Ref. 1; AAA24848." evidence="3" ref="1">
    <original>E</original>
    <variation>D</variation>
    <location>
        <position position="35"/>
    </location>
</feature>
<feature type="sequence conflict" description="In Ref. 1; AAA24848 and 2; CAA57440." evidence="3" ref="1 2">
    <original>T</original>
    <variation>V</variation>
    <location>
        <position position="36"/>
    </location>
</feature>
<feature type="sequence conflict" description="In Ref. 2; CAA57440." evidence="3" ref="2">
    <original>LQ</original>
    <variation>MK</variation>
    <location>
        <begin position="47"/>
        <end position="48"/>
    </location>
</feature>
<feature type="sequence conflict" description="In Ref. 2; CAA57440." evidence="3" ref="2">
    <original>K</original>
    <variation>Q</variation>
    <location>
        <position position="58"/>
    </location>
</feature>
<feature type="sequence conflict" description="In Ref. 2; CAA57440." evidence="3" ref="2">
    <original>N</original>
    <variation>S</variation>
    <location>
        <position position="78"/>
    </location>
</feature>
<feature type="sequence conflict" description="In Ref. 1; AAA24848 and 2; CAA57440." evidence="3" ref="1 2">
    <original>L</original>
    <variation>Q</variation>
    <location>
        <position position="115"/>
    </location>
</feature>
<feature type="sequence conflict" description="In Ref. 1; AAA24848 and 2; CAA57440." evidence="3" ref="1 2">
    <original>D</original>
    <variation>N</variation>
    <location>
        <position position="133"/>
    </location>
</feature>
<feature type="sequence conflict" description="In Ref. 2; CAA57440." evidence="3" ref="2">
    <original>V</original>
    <variation>L</variation>
    <location>
        <position position="136"/>
    </location>
</feature>
<feature type="sequence conflict" description="In Ref. 2; CAA57440." evidence="3" ref="2">
    <original>M</original>
    <variation>I</variation>
    <location>
        <position position="139"/>
    </location>
</feature>
<feature type="sequence conflict" description="In Ref. 2; CAA57440." evidence="3" ref="2">
    <original>M</original>
    <variation>I</variation>
    <location>
        <position position="144"/>
    </location>
</feature>
<feature type="sequence conflict" description="In Ref. 2; CAA57440." evidence="3" ref="2">
    <original>D</original>
    <variation>H</variation>
    <location>
        <position position="150"/>
    </location>
</feature>
<feature type="sequence conflict" description="In Ref. 2; CAA57440." evidence="3" ref="2">
    <original>V</original>
    <variation>I</variation>
    <location>
        <position position="156"/>
    </location>
</feature>
<feature type="sequence conflict" description="In Ref. 1; AAA24848." evidence="3" ref="1">
    <original>E</original>
    <variation>K</variation>
    <location>
        <position position="168"/>
    </location>
</feature>
<feature type="sequence conflict" description="In Ref. 1; AAA24848." evidence="3" ref="1">
    <original>KN</original>
    <variation>QS</variation>
    <location>
        <begin position="172"/>
        <end position="173"/>
    </location>
</feature>
<feature type="sequence conflict" description="In Ref. 2; CAA57440." evidence="3" ref="2">
    <original>R</original>
    <variation>S</variation>
    <location>
        <position position="234"/>
    </location>
</feature>
<feature type="sequence conflict" description="In Ref. 1; AAA24848." evidence="3" ref="1">
    <original>N</original>
    <variation>T</variation>
    <location>
        <position position="252"/>
    </location>
</feature>
<feature type="sequence conflict" description="In Ref. 1; AAA24848." evidence="3" ref="1">
    <original>N</original>
    <variation>I</variation>
    <location>
        <position position="280"/>
    </location>
</feature>
<feature type="sequence conflict" description="In Ref. 1; AAA24848 and 2; CAA57440." evidence="3" ref="1 2">
    <original>V</original>
    <variation>I</variation>
    <location>
        <position position="304"/>
    </location>
</feature>
<feature type="sequence conflict" description="In Ref. 2; CAA57440." evidence="3" ref="2">
    <original>N</original>
    <variation>K</variation>
    <location>
        <position position="314"/>
    </location>
</feature>
<feature type="sequence conflict" description="In Ref. 2; CAA57440." evidence="3" ref="2">
    <original>R</original>
    <variation>K</variation>
    <location>
        <position position="319"/>
    </location>
</feature>
<feature type="sequence conflict" description="In Ref. 2; CAA57440." evidence="3" ref="2">
    <original>T</original>
    <variation>S</variation>
    <location>
        <position position="322"/>
    </location>
</feature>
<feature type="sequence conflict" description="In Ref. 2; CAA57440." evidence="3" ref="2">
    <original>V</original>
    <variation>I</variation>
    <location>
        <position position="325"/>
    </location>
</feature>
<feature type="sequence conflict" description="In Ref. 1; AAA24848 and 2; CAA57440." evidence="3" ref="1 2">
    <original>N</original>
    <variation>S</variation>
    <location>
        <position position="332"/>
    </location>
</feature>
<feature type="sequence conflict" description="In Ref. 2; CAA57440." evidence="3" ref="2">
    <original>SI</original>
    <variation>AV</variation>
    <location>
        <begin position="338"/>
        <end position="339"/>
    </location>
</feature>
<feature type="sequence conflict" description="In Ref. 1 and 2." evidence="3" ref="1 2">
    <original>S</original>
    <variation>T</variation>
    <location>
        <position position="344"/>
    </location>
</feature>
<feature type="sequence conflict" description="In Ref. 1 and 2." evidence="3" ref="1 2">
    <original>S</original>
    <variation>G</variation>
    <location>
        <position position="362"/>
    </location>
</feature>
<keyword id="KW-0106">Calcium</keyword>
<keyword id="KW-0903">Direct protein sequencing</keyword>
<keyword id="KW-1015">Disulfide bond</keyword>
<keyword id="KW-0456">Lyase</keyword>
<keyword id="KW-0479">Metal-binding</keyword>
<keyword id="KW-1185">Reference proteome</keyword>
<keyword id="KW-0964">Secreted</keyword>
<keyword id="KW-0732">Signal</keyword>
<sequence length="374" mass="40446">MKYLLPTAATGLLLLAAQPAVAANTGGYATTDGGETSGAVKKTARSLQEIVDIIEAAKVDSKGKKVKGGAYPLIITYNGNEDSLIKAAEKNICGQWSKDARGVQIKEFTKGITILGTNGSSANFGVWIVNSSDVVVRNMRFGYMPGGAQDGDAIRVDNSPNVWIDHNEIFAKNFECKGTPDNDTTFESAVDIKKGSTNVTVSYNYIHGIKKVGLSGASNTDTGRNLTYHHNIYRDVNSRLPLQRGGLVHAYNNLYDGITGSGFNVRQKGIALIESNWFENALNPVTARNDSSNFGTWELRNNNVTKPADFSKYNITWGRPSTPHVNADDWKNTGKFPSISYKYSPVSAQCVKDKLANYAGVSKNLAVLTAANCK</sequence>